<accession>Q6GBU3</accession>
<evidence type="ECO:0000255" key="1">
    <source>
        <dbReference type="HAMAP-Rule" id="MF_00574"/>
    </source>
</evidence>
<evidence type="ECO:0000305" key="2"/>
<proteinExistence type="inferred from homology"/>
<dbReference type="EMBL" id="BX571857">
    <property type="protein sequence ID" value="CAG42277.1"/>
    <property type="status" value="ALT_INIT"/>
    <property type="molecule type" value="Genomic_DNA"/>
</dbReference>
<dbReference type="RefSeq" id="WP_000031892.1">
    <property type="nucleotide sequence ID" value="NC_002953.3"/>
</dbReference>
<dbReference type="SMR" id="Q6GBU3"/>
<dbReference type="KEGG" id="sas:SAS0502"/>
<dbReference type="HOGENOM" id="CLU_168063_0_0_9"/>
<dbReference type="GO" id="GO:0003723">
    <property type="term" value="F:RNA binding"/>
    <property type="evidence" value="ECO:0007669"/>
    <property type="project" value="UniProtKB-UniRule"/>
</dbReference>
<dbReference type="Gene3D" id="3.30.1330.30">
    <property type="match status" value="1"/>
</dbReference>
<dbReference type="HAMAP" id="MF_00574">
    <property type="entry name" value="Ribosomal_eL8_Bact"/>
    <property type="match status" value="1"/>
</dbReference>
<dbReference type="InterPro" id="IPR029064">
    <property type="entry name" value="Ribosomal_eL30-like_sf"/>
</dbReference>
<dbReference type="InterPro" id="IPR004038">
    <property type="entry name" value="Ribosomal_eL8/eL30/eS12/Gad45"/>
</dbReference>
<dbReference type="InterPro" id="IPR023460">
    <property type="entry name" value="RNA_bf_YbxF-like"/>
</dbReference>
<dbReference type="NCBIfam" id="NF010123">
    <property type="entry name" value="PRK13600.1"/>
    <property type="match status" value="1"/>
</dbReference>
<dbReference type="Pfam" id="PF01248">
    <property type="entry name" value="Ribosomal_L7Ae"/>
    <property type="match status" value="1"/>
</dbReference>
<dbReference type="SUPFAM" id="SSF55315">
    <property type="entry name" value="L30e-like"/>
    <property type="match status" value="1"/>
</dbReference>
<keyword id="KW-0694">RNA-binding</keyword>
<organism>
    <name type="scientific">Staphylococcus aureus (strain MSSA476)</name>
    <dbReference type="NCBI Taxonomy" id="282459"/>
    <lineage>
        <taxon>Bacteria</taxon>
        <taxon>Bacillati</taxon>
        <taxon>Bacillota</taxon>
        <taxon>Bacilli</taxon>
        <taxon>Bacillales</taxon>
        <taxon>Staphylococcaceae</taxon>
        <taxon>Staphylococcus</taxon>
    </lineage>
</organism>
<name>RXL7_STAAS</name>
<reference key="1">
    <citation type="journal article" date="2004" name="Proc. Natl. Acad. Sci. U.S.A.">
        <title>Complete genomes of two clinical Staphylococcus aureus strains: evidence for the rapid evolution of virulence and drug resistance.</title>
        <authorList>
            <person name="Holden M.T.G."/>
            <person name="Feil E.J."/>
            <person name="Lindsay J.A."/>
            <person name="Peacock S.J."/>
            <person name="Day N.P.J."/>
            <person name="Enright M.C."/>
            <person name="Foster T.J."/>
            <person name="Moore C.E."/>
            <person name="Hurst L."/>
            <person name="Atkin R."/>
            <person name="Barron A."/>
            <person name="Bason N."/>
            <person name="Bentley S.D."/>
            <person name="Chillingworth C."/>
            <person name="Chillingworth T."/>
            <person name="Churcher C."/>
            <person name="Clark L."/>
            <person name="Corton C."/>
            <person name="Cronin A."/>
            <person name="Doggett J."/>
            <person name="Dowd L."/>
            <person name="Feltwell T."/>
            <person name="Hance Z."/>
            <person name="Harris B."/>
            <person name="Hauser H."/>
            <person name="Holroyd S."/>
            <person name="Jagels K."/>
            <person name="James K.D."/>
            <person name="Lennard N."/>
            <person name="Line A."/>
            <person name="Mayes R."/>
            <person name="Moule S."/>
            <person name="Mungall K."/>
            <person name="Ormond D."/>
            <person name="Quail M.A."/>
            <person name="Rabbinowitsch E."/>
            <person name="Rutherford K.M."/>
            <person name="Sanders M."/>
            <person name="Sharp S."/>
            <person name="Simmonds M."/>
            <person name="Stevens K."/>
            <person name="Whitehead S."/>
            <person name="Barrell B.G."/>
            <person name="Spratt B.G."/>
            <person name="Parkhill J."/>
        </authorList>
    </citation>
    <scope>NUCLEOTIDE SEQUENCE [LARGE SCALE GENOMIC DNA]</scope>
    <source>
        <strain>MSSA476</strain>
    </source>
</reference>
<gene>
    <name type="ordered locus">SAS0502</name>
</gene>
<comment type="similarity">
    <text evidence="1">Belongs to the eukaryotic ribosomal protein eL8 family.</text>
</comment>
<comment type="sequence caution" evidence="2">
    <conflict type="erroneous initiation">
        <sequence resource="EMBL-CDS" id="CAG42277"/>
    </conflict>
    <text>Extended N-terminus.</text>
</comment>
<protein>
    <recommendedName>
        <fullName evidence="1">RNA-binding protein SAS0502</fullName>
    </recommendedName>
    <alternativeName>
        <fullName evidence="2">Putative ribosomal protein L7Ae-like</fullName>
    </alternativeName>
    <alternativeName>
        <fullName evidence="1">Ribosomal protein eL8-like</fullName>
    </alternativeName>
</protein>
<sequence length="84" mass="9446">MSKEKVARFNKQHFVVGLKETLKALKKDQVTSLIIAEDVEVYLMTRVLSQINQKNIPVSFFKSKHALGKHVGINVNATIVALIK</sequence>
<feature type="chain" id="PRO_0000136819" description="RNA-binding protein SAS0502">
    <location>
        <begin position="1"/>
        <end position="84"/>
    </location>
</feature>